<organism>
    <name type="scientific">Shouchella clausii (strain KSM-K16)</name>
    <name type="common">Alkalihalobacillus clausii</name>
    <dbReference type="NCBI Taxonomy" id="66692"/>
    <lineage>
        <taxon>Bacteria</taxon>
        <taxon>Bacillati</taxon>
        <taxon>Bacillota</taxon>
        <taxon>Bacilli</taxon>
        <taxon>Bacillales</taxon>
        <taxon>Bacillaceae</taxon>
        <taxon>Shouchella</taxon>
    </lineage>
</organism>
<gene>
    <name evidence="1" type="primary">tal</name>
    <name type="ordered locus">ABC3882</name>
</gene>
<reference key="1">
    <citation type="submission" date="2003-10" db="EMBL/GenBank/DDBJ databases">
        <title>The complete genome sequence of the alkaliphilic Bacillus clausii KSM-K16.</title>
        <authorList>
            <person name="Takaki Y."/>
            <person name="Kageyama Y."/>
            <person name="Shimamura S."/>
            <person name="Suzuki H."/>
            <person name="Nishi S."/>
            <person name="Hatada Y."/>
            <person name="Kawai S."/>
            <person name="Ito S."/>
            <person name="Horikoshi K."/>
        </authorList>
    </citation>
    <scope>NUCLEOTIDE SEQUENCE [LARGE SCALE GENOMIC DNA]</scope>
    <source>
        <strain>KSM-K16</strain>
    </source>
</reference>
<comment type="function">
    <text evidence="1">Transaldolase is important for the balance of metabolites in the pentose-phosphate pathway.</text>
</comment>
<comment type="catalytic activity">
    <reaction evidence="1">
        <text>D-sedoheptulose 7-phosphate + D-glyceraldehyde 3-phosphate = D-erythrose 4-phosphate + beta-D-fructose 6-phosphate</text>
        <dbReference type="Rhea" id="RHEA:17053"/>
        <dbReference type="ChEBI" id="CHEBI:16897"/>
        <dbReference type="ChEBI" id="CHEBI:57483"/>
        <dbReference type="ChEBI" id="CHEBI:57634"/>
        <dbReference type="ChEBI" id="CHEBI:59776"/>
        <dbReference type="EC" id="2.2.1.2"/>
    </reaction>
</comment>
<comment type="pathway">
    <text evidence="1">Carbohydrate degradation; pentose phosphate pathway; D-glyceraldehyde 3-phosphate and beta-D-fructose 6-phosphate from D-ribose 5-phosphate and D-xylulose 5-phosphate (non-oxidative stage): step 2/3.</text>
</comment>
<comment type="subcellular location">
    <subcellularLocation>
        <location evidence="1">Cytoplasm</location>
    </subcellularLocation>
</comment>
<comment type="similarity">
    <text evidence="1">Belongs to the transaldolase family. Type 3B subfamily.</text>
</comment>
<accession>Q5WB47</accession>
<proteinExistence type="inferred from homology"/>
<keyword id="KW-0963">Cytoplasm</keyword>
<keyword id="KW-0570">Pentose shunt</keyword>
<keyword id="KW-1185">Reference proteome</keyword>
<keyword id="KW-0704">Schiff base</keyword>
<keyword id="KW-0808">Transferase</keyword>
<name>TAL_SHOC1</name>
<feature type="chain" id="PRO_1000060458" description="Probable transaldolase">
    <location>
        <begin position="1"/>
        <end position="216"/>
    </location>
</feature>
<feature type="active site" description="Schiff-base intermediate with substrate" evidence="1">
    <location>
        <position position="83"/>
    </location>
</feature>
<evidence type="ECO:0000255" key="1">
    <source>
        <dbReference type="HAMAP-Rule" id="MF_00494"/>
    </source>
</evidence>
<sequence>MKFFVDTANINEIKEANELGILDGVTTNPSLVAKEGVDFHERIAEIAKLVPGSVSAEVISLDAEGMIEEGKTLAAISENITVKVPMTVDGLKAVKAFAELGIKTNVTLIFSVPQALLAARAGATYVSPFLGRLDDIGHDGLQLISDIADIFSTHGLPTQIIAASVRHPVHVSEAAKRGAHIATIPLNVIKQLTGHPLTDKGIEKFLADWNKENVEK</sequence>
<dbReference type="EC" id="2.2.1.2" evidence="1"/>
<dbReference type="EMBL" id="AP006627">
    <property type="protein sequence ID" value="BAD66413.1"/>
    <property type="molecule type" value="Genomic_DNA"/>
</dbReference>
<dbReference type="SMR" id="Q5WB47"/>
<dbReference type="STRING" id="66692.ABC3882"/>
<dbReference type="KEGG" id="bcl:ABC3882"/>
<dbReference type="eggNOG" id="COG0176">
    <property type="taxonomic scope" value="Bacteria"/>
</dbReference>
<dbReference type="HOGENOM" id="CLU_079764_0_0_9"/>
<dbReference type="OrthoDB" id="9807051at2"/>
<dbReference type="UniPathway" id="UPA00115">
    <property type="reaction ID" value="UER00414"/>
</dbReference>
<dbReference type="Proteomes" id="UP000001168">
    <property type="component" value="Chromosome"/>
</dbReference>
<dbReference type="GO" id="GO:0005737">
    <property type="term" value="C:cytoplasm"/>
    <property type="evidence" value="ECO:0007669"/>
    <property type="project" value="UniProtKB-SubCell"/>
</dbReference>
<dbReference type="GO" id="GO:0016832">
    <property type="term" value="F:aldehyde-lyase activity"/>
    <property type="evidence" value="ECO:0007669"/>
    <property type="project" value="InterPro"/>
</dbReference>
<dbReference type="GO" id="GO:0004801">
    <property type="term" value="F:transaldolase activity"/>
    <property type="evidence" value="ECO:0007669"/>
    <property type="project" value="UniProtKB-UniRule"/>
</dbReference>
<dbReference type="GO" id="GO:0005975">
    <property type="term" value="P:carbohydrate metabolic process"/>
    <property type="evidence" value="ECO:0007669"/>
    <property type="project" value="InterPro"/>
</dbReference>
<dbReference type="GO" id="GO:0006098">
    <property type="term" value="P:pentose-phosphate shunt"/>
    <property type="evidence" value="ECO:0007669"/>
    <property type="project" value="UniProtKB-UniRule"/>
</dbReference>
<dbReference type="CDD" id="cd00956">
    <property type="entry name" value="Transaldolase_FSA"/>
    <property type="match status" value="1"/>
</dbReference>
<dbReference type="FunFam" id="3.20.20.70:FF:000018">
    <property type="entry name" value="Probable transaldolase"/>
    <property type="match status" value="1"/>
</dbReference>
<dbReference type="Gene3D" id="3.20.20.70">
    <property type="entry name" value="Aldolase class I"/>
    <property type="match status" value="1"/>
</dbReference>
<dbReference type="HAMAP" id="MF_00494">
    <property type="entry name" value="Transaldolase_3b"/>
    <property type="match status" value="1"/>
</dbReference>
<dbReference type="InterPro" id="IPR013785">
    <property type="entry name" value="Aldolase_TIM"/>
</dbReference>
<dbReference type="InterPro" id="IPR001585">
    <property type="entry name" value="TAL/FSA"/>
</dbReference>
<dbReference type="InterPro" id="IPR022999">
    <property type="entry name" value="Transaldolase_3B"/>
</dbReference>
<dbReference type="InterPro" id="IPR004731">
    <property type="entry name" value="Transaldolase_3B/F6P_aldolase"/>
</dbReference>
<dbReference type="InterPro" id="IPR018225">
    <property type="entry name" value="Transaldolase_AS"/>
</dbReference>
<dbReference type="InterPro" id="IPR033919">
    <property type="entry name" value="TSA/FSA_arc/bac"/>
</dbReference>
<dbReference type="NCBIfam" id="TIGR00875">
    <property type="entry name" value="fsa_talC_mipB"/>
    <property type="match status" value="1"/>
</dbReference>
<dbReference type="PANTHER" id="PTHR10683">
    <property type="entry name" value="TRANSALDOLASE"/>
    <property type="match status" value="1"/>
</dbReference>
<dbReference type="PANTHER" id="PTHR10683:SF36">
    <property type="entry name" value="TRANSALDOLASE"/>
    <property type="match status" value="1"/>
</dbReference>
<dbReference type="Pfam" id="PF00923">
    <property type="entry name" value="TAL_FSA"/>
    <property type="match status" value="1"/>
</dbReference>
<dbReference type="SUPFAM" id="SSF51569">
    <property type="entry name" value="Aldolase"/>
    <property type="match status" value="1"/>
</dbReference>
<dbReference type="PROSITE" id="PS01054">
    <property type="entry name" value="TRANSALDOLASE_1"/>
    <property type="match status" value="1"/>
</dbReference>
<dbReference type="PROSITE" id="PS00958">
    <property type="entry name" value="TRANSALDOLASE_2"/>
    <property type="match status" value="1"/>
</dbReference>
<protein>
    <recommendedName>
        <fullName evidence="1">Probable transaldolase</fullName>
        <ecNumber evidence="1">2.2.1.2</ecNumber>
    </recommendedName>
</protein>